<gene>
    <name evidence="1" type="primary">xseA</name>
    <name type="ordered locus">ABO_1852</name>
</gene>
<protein>
    <recommendedName>
        <fullName evidence="1">Exodeoxyribonuclease 7 large subunit</fullName>
        <ecNumber evidence="1">3.1.11.6</ecNumber>
    </recommendedName>
    <alternativeName>
        <fullName evidence="1">Exodeoxyribonuclease VII large subunit</fullName>
        <shortName evidence="1">Exonuclease VII large subunit</shortName>
    </alternativeName>
</protein>
<feature type="chain" id="PRO_0000273638" description="Exodeoxyribonuclease 7 large subunit">
    <location>
        <begin position="1"/>
        <end position="448"/>
    </location>
</feature>
<accession>Q0VNE8</accession>
<comment type="function">
    <text evidence="1">Bidirectionally degrades single-stranded DNA into large acid-insoluble oligonucleotides, which are then degraded further into small acid-soluble oligonucleotides.</text>
</comment>
<comment type="catalytic activity">
    <reaction evidence="1">
        <text>Exonucleolytic cleavage in either 5'- to 3'- or 3'- to 5'-direction to yield nucleoside 5'-phosphates.</text>
        <dbReference type="EC" id="3.1.11.6"/>
    </reaction>
</comment>
<comment type="subunit">
    <text evidence="1">Heterooligomer composed of large and small subunits.</text>
</comment>
<comment type="subcellular location">
    <subcellularLocation>
        <location evidence="1">Cytoplasm</location>
    </subcellularLocation>
</comment>
<comment type="similarity">
    <text evidence="1">Belongs to the XseA family.</text>
</comment>
<dbReference type="EC" id="3.1.11.6" evidence="1"/>
<dbReference type="EMBL" id="AM286690">
    <property type="protein sequence ID" value="CAL17300.1"/>
    <property type="molecule type" value="Genomic_DNA"/>
</dbReference>
<dbReference type="RefSeq" id="WP_011589131.1">
    <property type="nucleotide sequence ID" value="NC_008260.1"/>
</dbReference>
<dbReference type="SMR" id="Q0VNE8"/>
<dbReference type="STRING" id="393595.ABO_1852"/>
<dbReference type="KEGG" id="abo:ABO_1852"/>
<dbReference type="eggNOG" id="COG1570">
    <property type="taxonomic scope" value="Bacteria"/>
</dbReference>
<dbReference type="HOGENOM" id="CLU_023625_3_1_6"/>
<dbReference type="OrthoDB" id="9802795at2"/>
<dbReference type="Proteomes" id="UP000008871">
    <property type="component" value="Chromosome"/>
</dbReference>
<dbReference type="GO" id="GO:0005737">
    <property type="term" value="C:cytoplasm"/>
    <property type="evidence" value="ECO:0007669"/>
    <property type="project" value="UniProtKB-SubCell"/>
</dbReference>
<dbReference type="GO" id="GO:0009318">
    <property type="term" value="C:exodeoxyribonuclease VII complex"/>
    <property type="evidence" value="ECO:0007669"/>
    <property type="project" value="InterPro"/>
</dbReference>
<dbReference type="GO" id="GO:0008855">
    <property type="term" value="F:exodeoxyribonuclease VII activity"/>
    <property type="evidence" value="ECO:0007669"/>
    <property type="project" value="UniProtKB-UniRule"/>
</dbReference>
<dbReference type="GO" id="GO:0003676">
    <property type="term" value="F:nucleic acid binding"/>
    <property type="evidence" value="ECO:0007669"/>
    <property type="project" value="InterPro"/>
</dbReference>
<dbReference type="GO" id="GO:0006308">
    <property type="term" value="P:DNA catabolic process"/>
    <property type="evidence" value="ECO:0007669"/>
    <property type="project" value="UniProtKB-UniRule"/>
</dbReference>
<dbReference type="CDD" id="cd04489">
    <property type="entry name" value="ExoVII_LU_OBF"/>
    <property type="match status" value="1"/>
</dbReference>
<dbReference type="Gene3D" id="1.20.1480.30">
    <property type="entry name" value="Designed four-helix bundle protein"/>
    <property type="match status" value="1"/>
</dbReference>
<dbReference type="HAMAP" id="MF_00378">
    <property type="entry name" value="Exonuc_7_L"/>
    <property type="match status" value="1"/>
</dbReference>
<dbReference type="InterPro" id="IPR003753">
    <property type="entry name" value="Exonuc_VII_L"/>
</dbReference>
<dbReference type="InterPro" id="IPR020579">
    <property type="entry name" value="Exonuc_VII_lsu_C"/>
</dbReference>
<dbReference type="InterPro" id="IPR025824">
    <property type="entry name" value="OB-fold_nuc-bd_dom"/>
</dbReference>
<dbReference type="NCBIfam" id="TIGR00237">
    <property type="entry name" value="xseA"/>
    <property type="match status" value="1"/>
</dbReference>
<dbReference type="PANTHER" id="PTHR30008">
    <property type="entry name" value="EXODEOXYRIBONUCLEASE 7 LARGE SUBUNIT"/>
    <property type="match status" value="1"/>
</dbReference>
<dbReference type="PANTHER" id="PTHR30008:SF0">
    <property type="entry name" value="EXODEOXYRIBONUCLEASE 7 LARGE SUBUNIT"/>
    <property type="match status" value="1"/>
</dbReference>
<dbReference type="Pfam" id="PF02601">
    <property type="entry name" value="Exonuc_VII_L"/>
    <property type="match status" value="1"/>
</dbReference>
<dbReference type="Pfam" id="PF13742">
    <property type="entry name" value="tRNA_anti_2"/>
    <property type="match status" value="1"/>
</dbReference>
<dbReference type="SUPFAM" id="SSF57997">
    <property type="entry name" value="Tropomyosin"/>
    <property type="match status" value="1"/>
</dbReference>
<organism>
    <name type="scientific">Alcanivorax borkumensis (strain ATCC 700651 / DSM 11573 / NCIMB 13689 / SK2)</name>
    <dbReference type="NCBI Taxonomy" id="393595"/>
    <lineage>
        <taxon>Bacteria</taxon>
        <taxon>Pseudomonadati</taxon>
        <taxon>Pseudomonadota</taxon>
        <taxon>Gammaproteobacteria</taxon>
        <taxon>Oceanospirillales</taxon>
        <taxon>Alcanivoracaceae</taxon>
        <taxon>Alcanivorax</taxon>
    </lineage>
</organism>
<sequence>MTISSRAEPLSISQLNLDAQGLLESSFPLIWLQGELSNFSRPASGHWYFSLKDTRAQINGAMFRNRNRLLNFAPQNGEQVLVRAKITLYVPRGNFQIVVEHMEPAGQGALKAQFDALKAQLQSEGLFAQEHKRTLPAWPNQIGVITSPSGAAIRDILQVLQRRCPSIPVLIYPAAVQGAEAPAQLRQALALAVARNECDVLILGRGGGSLEDLWAFNDEGLARAVANCPIPIVSAVGHEVDTGLTDFAADLRAPTPSAAAELVSPDLSIVSQRLAGLHRRLRWVMAQELRTVQERLRHLSQRLRSPRQHLEQSSQRLDELQNRLQRQMQHRLTLLQGRLQPSQQRLARLSPQRLLVERQQRLATLSKRLPQPILRQLQQQQLQLAGLSKRLHTASPLETLARGYSITFKGNQAVRSVEQLQAGDTLTTRLADGEIIARVEHVQVSDTD</sequence>
<reference key="1">
    <citation type="journal article" date="2006" name="Nat. Biotechnol.">
        <title>Genome sequence of the ubiquitous hydrocarbon-degrading marine bacterium Alcanivorax borkumensis.</title>
        <authorList>
            <person name="Schneiker S."/>
            <person name="Martins dos Santos V.A.P."/>
            <person name="Bartels D."/>
            <person name="Bekel T."/>
            <person name="Brecht M."/>
            <person name="Buhrmester J."/>
            <person name="Chernikova T.N."/>
            <person name="Denaro R."/>
            <person name="Ferrer M."/>
            <person name="Gertler C."/>
            <person name="Goesmann A."/>
            <person name="Golyshina O.V."/>
            <person name="Kaminski F."/>
            <person name="Khachane A.N."/>
            <person name="Lang S."/>
            <person name="Linke B."/>
            <person name="McHardy A.C."/>
            <person name="Meyer F."/>
            <person name="Nechitaylo T."/>
            <person name="Puehler A."/>
            <person name="Regenhardt D."/>
            <person name="Rupp O."/>
            <person name="Sabirova J.S."/>
            <person name="Selbitschka W."/>
            <person name="Yakimov M.M."/>
            <person name="Timmis K.N."/>
            <person name="Vorhoelter F.-J."/>
            <person name="Weidner S."/>
            <person name="Kaiser O."/>
            <person name="Golyshin P.N."/>
        </authorList>
    </citation>
    <scope>NUCLEOTIDE SEQUENCE [LARGE SCALE GENOMIC DNA]</scope>
    <source>
        <strain>ATCC 700651 / DSM 11573 / NCIMB 13689 / SK2</strain>
    </source>
</reference>
<proteinExistence type="inferred from homology"/>
<keyword id="KW-0963">Cytoplasm</keyword>
<keyword id="KW-0269">Exonuclease</keyword>
<keyword id="KW-0378">Hydrolase</keyword>
<keyword id="KW-0540">Nuclease</keyword>
<keyword id="KW-1185">Reference proteome</keyword>
<name>EX7L_ALCBS</name>
<evidence type="ECO:0000255" key="1">
    <source>
        <dbReference type="HAMAP-Rule" id="MF_00378"/>
    </source>
</evidence>